<organism>
    <name type="scientific">Fagopyrum esculentum</name>
    <name type="common">Common buckwheat</name>
    <name type="synonym">Polygonum fagopyrum</name>
    <dbReference type="NCBI Taxonomy" id="3617"/>
    <lineage>
        <taxon>Eukaryota</taxon>
        <taxon>Viridiplantae</taxon>
        <taxon>Streptophyta</taxon>
        <taxon>Embryophyta</taxon>
        <taxon>Tracheophyta</taxon>
        <taxon>Spermatophyta</taxon>
        <taxon>Magnoliopsida</taxon>
        <taxon>eudicotyledons</taxon>
        <taxon>Gunneridae</taxon>
        <taxon>Pentapetalae</taxon>
        <taxon>Caryophyllales</taxon>
        <taxon>Polygonaceae</taxon>
        <taxon>Polygonoideae</taxon>
        <taxon>Fagopyreae</taxon>
        <taxon>Fagopyrum</taxon>
    </lineage>
</organism>
<evidence type="ECO:0000250" key="1"/>
<evidence type="ECO:0000250" key="2">
    <source>
        <dbReference type="UniProtKB" id="P09842"/>
    </source>
</evidence>
<evidence type="ECO:0000255" key="3"/>
<evidence type="ECO:0000269" key="4">
    <source ref="1"/>
</evidence>
<evidence type="ECO:0000303" key="5">
    <source ref="1"/>
</evidence>
<evidence type="ECO:0000305" key="6"/>
<name>SSG1_FAGES</name>
<keyword id="KW-0035">Amyloplast</keyword>
<keyword id="KW-0150">Chloroplast</keyword>
<keyword id="KW-0903">Direct protein sequencing</keyword>
<keyword id="KW-0328">Glycosyltransferase</keyword>
<keyword id="KW-0934">Plastid</keyword>
<keyword id="KW-0750">Starch biosynthesis</keyword>
<keyword id="KW-0808">Transferase</keyword>
<comment type="function">
    <text evidence="4">Required for the synthesis of amylose in endosperm.</text>
</comment>
<comment type="catalytic activity">
    <reaction evidence="4">
        <text>an NDP-alpha-D-glucose + [(1-&gt;4)-alpha-D-glucosyl](n) = [(1-&gt;4)-alpha-D-glucosyl](n+1) + a ribonucleoside 5'-diphosphate + H(+)</text>
        <dbReference type="Rhea" id="RHEA:15873"/>
        <dbReference type="Rhea" id="RHEA-COMP:9584"/>
        <dbReference type="Rhea" id="RHEA-COMP:9587"/>
        <dbReference type="ChEBI" id="CHEBI:15378"/>
        <dbReference type="ChEBI" id="CHEBI:15444"/>
        <dbReference type="ChEBI" id="CHEBI:57930"/>
        <dbReference type="ChEBI" id="CHEBI:76533"/>
        <dbReference type="EC" id="2.4.1.242"/>
    </reaction>
</comment>
<comment type="pathway">
    <text>Glycan biosynthesis; starch biosynthesis.</text>
</comment>
<comment type="subcellular location">
    <subcellularLocation>
        <location evidence="1">Plastid</location>
        <location evidence="1">Chloroplast</location>
    </subcellularLocation>
    <subcellularLocation>
        <location evidence="1">Plastid</location>
        <location evidence="1">Amyloplast</location>
    </subcellularLocation>
    <text evidence="1">Amyloplast or chloroplast, granule-bound.</text>
</comment>
<comment type="tissue specificity">
    <text evidence="4">Expressed in endosperm.</text>
</comment>
<comment type="developmental stage">
    <text evidence="4">Expressed in grains from mid-maturation onwards.</text>
</comment>
<comment type="similarity">
    <text evidence="3">Belongs to the glycosyltransferase 1 family. Bacterial/plant glycogen synthase subfamily.</text>
</comment>
<accession>P84633</accession>
<proteinExistence type="evidence at protein level"/>
<protein>
    <recommendedName>
        <fullName>Granule-bound starch synthase 1, chloroplastic/amyloplastic</fullName>
        <ecNumber>2.4.1.242</ecNumber>
    </recommendedName>
    <alternativeName>
        <fullName>Granule-bound starch synthase I</fullName>
        <shortName>GBSS-I</shortName>
    </alternativeName>
</protein>
<reference evidence="6" key="1">
    <citation type="submission" date="2005-08" db="UniProtKB">
        <title>N-terminal amino acid sequence of GBSS-I from grains of common buckwheat (Fagopyrum esculentum Moench).</title>
        <authorList>
            <person name="Chrungoo N.K."/>
            <person name="Paul N."/>
        </authorList>
    </citation>
    <scope>PROTEIN SEQUENCE</scope>
    <scope>FUNCTION</scope>
    <scope>CATALYTIC ACTIVITY</scope>
    <scope>TISSUE SPECIFICITY</scope>
    <scope>DEVELOPMENTAL STAGE</scope>
    <source>
        <tissue evidence="4">Endosperm</tissue>
    </source>
</reference>
<dbReference type="EC" id="2.4.1.242"/>
<dbReference type="UniPathway" id="UPA00152"/>
<dbReference type="GO" id="GO:0009501">
    <property type="term" value="C:amyloplast"/>
    <property type="evidence" value="ECO:0007669"/>
    <property type="project" value="UniProtKB-SubCell"/>
</dbReference>
<dbReference type="GO" id="GO:0009507">
    <property type="term" value="C:chloroplast"/>
    <property type="evidence" value="ECO:0007669"/>
    <property type="project" value="UniProtKB-SubCell"/>
</dbReference>
<dbReference type="GO" id="GO:0033840">
    <property type="term" value="F:alpha-1,4-glucan glucosyltransferase (NDP-glucose donor) activity"/>
    <property type="evidence" value="ECO:0007669"/>
    <property type="project" value="UniProtKB-EC"/>
</dbReference>
<dbReference type="GO" id="GO:0019252">
    <property type="term" value="P:starch biosynthetic process"/>
    <property type="evidence" value="ECO:0007669"/>
    <property type="project" value="UniProtKB-UniPathway"/>
</dbReference>
<dbReference type="Gene3D" id="3.40.50.2000">
    <property type="entry name" value="Glycogen Phosphorylase B"/>
    <property type="match status" value="1"/>
</dbReference>
<dbReference type="InterPro" id="IPR013534">
    <property type="entry name" value="Starch_synth_cat_dom"/>
</dbReference>
<dbReference type="Pfam" id="PF08323">
    <property type="entry name" value="Glyco_transf_5"/>
    <property type="match status" value="1"/>
</dbReference>
<feature type="chain" id="PRO_0000188669" description="Granule-bound starch synthase 1, chloroplastic/amyloplastic">
    <location>
        <begin position="1"/>
        <end position="25" status="greater than"/>
    </location>
</feature>
<feature type="binding site" evidence="2">
    <location>
        <position position="16"/>
    </location>
    <ligand>
        <name>ADP-alpha-D-glucose</name>
        <dbReference type="ChEBI" id="CHEBI:57498"/>
    </ligand>
</feature>
<feature type="non-terminal residue" evidence="5">
    <location>
        <position position="25"/>
    </location>
</feature>
<sequence>GMNLVFVGAEVAPWSKTGGLGDVLA</sequence>